<comment type="function">
    <text>Ferredoxins are iron-sulfur proteins that transfer electrons in a wide variety of metabolic reactions.</text>
</comment>
<comment type="cofactor">
    <cofactor>
        <name>[4Fe-4S] cluster</name>
        <dbReference type="ChEBI" id="CHEBI:49883"/>
    </cofactor>
    <text>Binds 2 [4Fe-4S] clusters.</text>
</comment>
<comment type="subunit">
    <text>Homodimer.</text>
</comment>
<comment type="subcellular location">
    <subcellularLocation>
        <location>Periplasm</location>
    </subcellularLocation>
</comment>
<dbReference type="PIR" id="A00213">
    <property type="entry name" value="FEDV2N"/>
</dbReference>
<dbReference type="SMR" id="P00211"/>
<dbReference type="STRING" id="52561.SAMN05421830_11717"/>
<dbReference type="GO" id="GO:0042597">
    <property type="term" value="C:periplasmic space"/>
    <property type="evidence" value="ECO:0007669"/>
    <property type="project" value="UniProtKB-SubCell"/>
</dbReference>
<dbReference type="GO" id="GO:0051539">
    <property type="term" value="F:4 iron, 4 sulfur cluster binding"/>
    <property type="evidence" value="ECO:0007669"/>
    <property type="project" value="UniProtKB-KW"/>
</dbReference>
<dbReference type="GO" id="GO:0009055">
    <property type="term" value="F:electron transfer activity"/>
    <property type="evidence" value="ECO:0007669"/>
    <property type="project" value="InterPro"/>
</dbReference>
<dbReference type="GO" id="GO:0005506">
    <property type="term" value="F:iron ion binding"/>
    <property type="evidence" value="ECO:0007669"/>
    <property type="project" value="InterPro"/>
</dbReference>
<dbReference type="Gene3D" id="3.30.70.20">
    <property type="match status" value="2"/>
</dbReference>
<dbReference type="InterPro" id="IPR001080">
    <property type="entry name" value="3Fe4S_ferredoxin"/>
</dbReference>
<dbReference type="InterPro" id="IPR017896">
    <property type="entry name" value="4Fe4S_Fe-S-bd"/>
</dbReference>
<dbReference type="InterPro" id="IPR017900">
    <property type="entry name" value="4Fe4S_Fe_S_CS"/>
</dbReference>
<dbReference type="InterPro" id="IPR050572">
    <property type="entry name" value="Fe-S_Ferredoxin"/>
</dbReference>
<dbReference type="PANTHER" id="PTHR43687">
    <property type="entry name" value="ADENYLYLSULFATE REDUCTASE, BETA SUBUNIT"/>
    <property type="match status" value="1"/>
</dbReference>
<dbReference type="PANTHER" id="PTHR43687:SF6">
    <property type="entry name" value="L-ASPARTATE SEMIALDEHYDE SULFURTRANSFERASE IRON-SULFUR SUBUNIT"/>
    <property type="match status" value="1"/>
</dbReference>
<dbReference type="Pfam" id="PF13237">
    <property type="entry name" value="Fer4_10"/>
    <property type="match status" value="1"/>
</dbReference>
<dbReference type="PRINTS" id="PR00352">
    <property type="entry name" value="3FE4SFRDOXIN"/>
</dbReference>
<dbReference type="SUPFAM" id="SSF54862">
    <property type="entry name" value="4Fe-4S ferredoxins"/>
    <property type="match status" value="1"/>
</dbReference>
<dbReference type="PROSITE" id="PS00198">
    <property type="entry name" value="4FE4S_FER_1"/>
    <property type="match status" value="2"/>
</dbReference>
<dbReference type="PROSITE" id="PS51379">
    <property type="entry name" value="4FE4S_FER_2"/>
    <property type="match status" value="2"/>
</dbReference>
<evidence type="ECO:0000250" key="1"/>
<evidence type="ECO:0000255" key="2">
    <source>
        <dbReference type="PROSITE-ProRule" id="PRU00711"/>
    </source>
</evidence>
<feature type="chain" id="PRO_0000159157" description="Ferredoxin-2">
    <location>
        <begin position="1"/>
        <end position="59"/>
    </location>
</feature>
<feature type="domain" description="4Fe-4S ferredoxin-type 1" evidence="2">
    <location>
        <begin position="3"/>
        <end position="32"/>
    </location>
</feature>
<feature type="domain" description="4Fe-4S ferredoxin-type 2" evidence="2">
    <location>
        <begin position="33"/>
        <end position="59"/>
    </location>
</feature>
<feature type="binding site" evidence="1">
    <location>
        <position position="12"/>
    </location>
    <ligand>
        <name>[4Fe-4S] cluster</name>
        <dbReference type="ChEBI" id="CHEBI:49883"/>
        <label>1</label>
    </ligand>
</feature>
<feature type="binding site" evidence="1">
    <location>
        <position position="15"/>
    </location>
    <ligand>
        <name>[4Fe-4S] cluster</name>
        <dbReference type="ChEBI" id="CHEBI:49883"/>
        <label>1</label>
    </ligand>
</feature>
<feature type="binding site" evidence="1">
    <location>
        <position position="18"/>
    </location>
    <ligand>
        <name>[4Fe-4S] cluster</name>
        <dbReference type="ChEBI" id="CHEBI:49883"/>
        <label>1</label>
    </ligand>
</feature>
<feature type="binding site" evidence="1">
    <location>
        <position position="22"/>
    </location>
    <ligand>
        <name>[4Fe-4S] cluster</name>
        <dbReference type="ChEBI" id="CHEBI:49883"/>
        <label>2</label>
    </ligand>
</feature>
<feature type="binding site" evidence="1">
    <location>
        <position position="42"/>
    </location>
    <ligand>
        <name>[4Fe-4S] cluster</name>
        <dbReference type="ChEBI" id="CHEBI:49883"/>
        <label>2</label>
    </ligand>
</feature>
<feature type="binding site" evidence="1">
    <location>
        <position position="45"/>
    </location>
    <ligand>
        <name>[4Fe-4S] cluster</name>
        <dbReference type="ChEBI" id="CHEBI:49883"/>
        <label>2</label>
    </ligand>
</feature>
<feature type="binding site" evidence="1">
    <location>
        <position position="48"/>
    </location>
    <ligand>
        <name>[4Fe-4S] cluster</name>
        <dbReference type="ChEBI" id="CHEBI:49883"/>
        <label>2</label>
    </ligand>
</feature>
<feature type="binding site" evidence="1">
    <location>
        <position position="52"/>
    </location>
    <ligand>
        <name>[4Fe-4S] cluster</name>
        <dbReference type="ChEBI" id="CHEBI:49883"/>
        <label>1</label>
    </ligand>
</feature>
<accession>P00211</accession>
<keyword id="KW-0004">4Fe-4S</keyword>
<keyword id="KW-0903">Direct protein sequencing</keyword>
<keyword id="KW-0249">Electron transport</keyword>
<keyword id="KW-0408">Iron</keyword>
<keyword id="KW-0411">Iron-sulfur</keyword>
<keyword id="KW-0479">Metal-binding</keyword>
<keyword id="KW-0574">Periplasm</keyword>
<keyword id="KW-0677">Repeat</keyword>
<keyword id="KW-0813">Transport</keyword>
<proteinExistence type="evidence at protein level"/>
<protein>
    <recommendedName>
        <fullName>Ferredoxin-2</fullName>
    </recommendedName>
    <alternativeName>
        <fullName>Ferredoxin II</fullName>
    </alternativeName>
</protein>
<name>FER2_DESNO</name>
<sequence>MGYSVIVDSDKCIGCGECVDVCPVEVYELQNGKAVPVNEEECLGCESCIEVCPQNAIVE</sequence>
<reference key="1">
    <citation type="journal article" date="1983" name="Biochimie">
        <title>Primary structure of the two (4 Fe-4 S) clusters ferredoxin from Desulfovibrio desulfuricans (strain Norway 4).</title>
        <authorList>
            <person name="Guerlesquin F.A."/>
            <person name="Bruschi M."/>
            <person name="Bovier-Lapierre G.E."/>
            <person name="Bonicel J.J."/>
            <person name="Couchoud P.M."/>
        </authorList>
    </citation>
    <scope>PROTEIN SEQUENCE</scope>
</reference>
<reference key="2">
    <citation type="journal article" date="1993" name="Biochim. Biophys. Acta">
        <title>Intramolecular electron transfer in ferredoxin II from Desulfovibrio desulfuricans Norway.</title>
        <authorList>
            <person name="Blanchard L."/>
            <person name="Payan F."/>
            <person name="Qian M."/>
            <person name="Haser R."/>
            <person name="Noailly M."/>
            <person name="Bruschi M."/>
            <person name="Guerlesquin F.A."/>
        </authorList>
    </citation>
    <scope>STRUCTURE BY NMR</scope>
</reference>
<organism>
    <name type="scientific">Desulfomicrobium norvegicum (strain DSM 1741 / NCIMB 8310)</name>
    <name type="common">Desulfovibrio baculatus (strain Norway 4)</name>
    <name type="synonym">Desulfovibrio desulfuricans (strain Norway 4)</name>
    <dbReference type="NCBI Taxonomy" id="52561"/>
    <lineage>
        <taxon>Bacteria</taxon>
        <taxon>Pseudomonadati</taxon>
        <taxon>Thermodesulfobacteriota</taxon>
        <taxon>Desulfovibrionia</taxon>
        <taxon>Desulfovibrionales</taxon>
        <taxon>Desulfomicrobiaceae</taxon>
        <taxon>Desulfomicrobium</taxon>
    </lineage>
</organism>